<evidence type="ECO:0000255" key="1">
    <source>
        <dbReference type="HAMAP-Rule" id="MF_00348"/>
    </source>
</evidence>
<feature type="chain" id="PRO_0000408224" description="DNA repair and recombination protein RadA">
    <location>
        <begin position="1"/>
        <end position="322"/>
    </location>
</feature>
<feature type="binding site" evidence="1">
    <location>
        <begin position="105"/>
        <end position="112"/>
    </location>
    <ligand>
        <name>ATP</name>
        <dbReference type="ChEBI" id="CHEBI:30616"/>
    </ligand>
</feature>
<gene>
    <name evidence="1" type="primary">radA</name>
    <name type="ordered locus">MMP1222</name>
</gene>
<proteinExistence type="inferred from homology"/>
<keyword id="KW-0067">ATP-binding</keyword>
<keyword id="KW-0227">DNA damage</keyword>
<keyword id="KW-0233">DNA recombination</keyword>
<keyword id="KW-0238">DNA-binding</keyword>
<keyword id="KW-0547">Nucleotide-binding</keyword>
<keyword id="KW-1185">Reference proteome</keyword>
<name>RADA_METMP</name>
<organism>
    <name type="scientific">Methanococcus maripaludis (strain DSM 14266 / JCM 13030 / NBRC 101832 / S2 / LL)</name>
    <dbReference type="NCBI Taxonomy" id="267377"/>
    <lineage>
        <taxon>Archaea</taxon>
        <taxon>Methanobacteriati</taxon>
        <taxon>Methanobacteriota</taxon>
        <taxon>Methanomada group</taxon>
        <taxon>Methanococci</taxon>
        <taxon>Methanococcales</taxon>
        <taxon>Methanococcaceae</taxon>
        <taxon>Methanococcus</taxon>
    </lineage>
</organism>
<protein>
    <recommendedName>
        <fullName evidence="1">DNA repair and recombination protein RadA</fullName>
    </recommendedName>
</protein>
<dbReference type="EMBL" id="BX950229">
    <property type="protein sequence ID" value="CAF30778.1"/>
    <property type="molecule type" value="Genomic_DNA"/>
</dbReference>
<dbReference type="RefSeq" id="WP_011171166.1">
    <property type="nucleotide sequence ID" value="NC_005791.1"/>
</dbReference>
<dbReference type="SMR" id="P0CW59"/>
<dbReference type="STRING" id="267377.MMP1222"/>
<dbReference type="EnsemblBacteria" id="CAF30778">
    <property type="protein sequence ID" value="CAF30778"/>
    <property type="gene ID" value="MMP1222"/>
</dbReference>
<dbReference type="GeneID" id="2761295"/>
<dbReference type="KEGG" id="mmp:MMP1222"/>
<dbReference type="PATRIC" id="fig|267377.15.peg.1255"/>
<dbReference type="eggNOG" id="arCOG00415">
    <property type="taxonomic scope" value="Archaea"/>
</dbReference>
<dbReference type="HOGENOM" id="CLU_041732_0_0_2"/>
<dbReference type="OrthoDB" id="31129at2157"/>
<dbReference type="Proteomes" id="UP000000590">
    <property type="component" value="Chromosome"/>
</dbReference>
<dbReference type="GO" id="GO:0005524">
    <property type="term" value="F:ATP binding"/>
    <property type="evidence" value="ECO:0007669"/>
    <property type="project" value="UniProtKB-UniRule"/>
</dbReference>
<dbReference type="GO" id="GO:0016887">
    <property type="term" value="F:ATP hydrolysis activity"/>
    <property type="evidence" value="ECO:0007669"/>
    <property type="project" value="InterPro"/>
</dbReference>
<dbReference type="GO" id="GO:0140664">
    <property type="term" value="F:ATP-dependent DNA damage sensor activity"/>
    <property type="evidence" value="ECO:0007669"/>
    <property type="project" value="InterPro"/>
</dbReference>
<dbReference type="GO" id="GO:0003684">
    <property type="term" value="F:damaged DNA binding"/>
    <property type="evidence" value="ECO:0007669"/>
    <property type="project" value="UniProtKB-UniRule"/>
</dbReference>
<dbReference type="GO" id="GO:0006310">
    <property type="term" value="P:DNA recombination"/>
    <property type="evidence" value="ECO:0007669"/>
    <property type="project" value="UniProtKB-UniRule"/>
</dbReference>
<dbReference type="GO" id="GO:0006281">
    <property type="term" value="P:DNA repair"/>
    <property type="evidence" value="ECO:0007669"/>
    <property type="project" value="UniProtKB-UniRule"/>
</dbReference>
<dbReference type="CDD" id="cd19515">
    <property type="entry name" value="archRadA"/>
    <property type="match status" value="1"/>
</dbReference>
<dbReference type="FunFam" id="3.40.50.300:FF:002052">
    <property type="entry name" value="DNA repair protein RAD51 homolog"/>
    <property type="match status" value="1"/>
</dbReference>
<dbReference type="Gene3D" id="1.10.150.20">
    <property type="entry name" value="5' to 3' exonuclease, C-terminal subdomain"/>
    <property type="match status" value="1"/>
</dbReference>
<dbReference type="Gene3D" id="3.40.50.300">
    <property type="entry name" value="P-loop containing nucleotide triphosphate hydrolases"/>
    <property type="match status" value="1"/>
</dbReference>
<dbReference type="HAMAP" id="MF_00348">
    <property type="entry name" value="RadA_arch"/>
    <property type="match status" value="1"/>
</dbReference>
<dbReference type="InterPro" id="IPR003593">
    <property type="entry name" value="AAA+_ATPase"/>
</dbReference>
<dbReference type="InterPro" id="IPR013632">
    <property type="entry name" value="DNA_recomb/repair_Rad51_C"/>
</dbReference>
<dbReference type="InterPro" id="IPR011938">
    <property type="entry name" value="DNA_recomb/repair_RadA"/>
</dbReference>
<dbReference type="InterPro" id="IPR016467">
    <property type="entry name" value="DNA_recomb/repair_RecA-like"/>
</dbReference>
<dbReference type="InterPro" id="IPR010995">
    <property type="entry name" value="DNA_repair_Rad51/TF_NusA_a-hlx"/>
</dbReference>
<dbReference type="InterPro" id="IPR003583">
    <property type="entry name" value="Hlx-hairpin-Hlx_DNA-bd_motif"/>
</dbReference>
<dbReference type="InterPro" id="IPR027417">
    <property type="entry name" value="P-loop_NTPase"/>
</dbReference>
<dbReference type="InterPro" id="IPR020588">
    <property type="entry name" value="RecA_ATP-bd"/>
</dbReference>
<dbReference type="InterPro" id="IPR020587">
    <property type="entry name" value="RecA_monomer-monomer_interface"/>
</dbReference>
<dbReference type="NCBIfam" id="NF003301">
    <property type="entry name" value="PRK04301.1"/>
    <property type="match status" value="1"/>
</dbReference>
<dbReference type="NCBIfam" id="TIGR02236">
    <property type="entry name" value="recomb_radA"/>
    <property type="match status" value="1"/>
</dbReference>
<dbReference type="PANTHER" id="PTHR22942:SF30">
    <property type="entry name" value="MEIOTIC RECOMBINATION PROTEIN DMC1_LIM15 HOMOLOG"/>
    <property type="match status" value="1"/>
</dbReference>
<dbReference type="PANTHER" id="PTHR22942">
    <property type="entry name" value="RECA/RAD51/RADA DNA STRAND-PAIRING FAMILY MEMBER"/>
    <property type="match status" value="1"/>
</dbReference>
<dbReference type="Pfam" id="PF14520">
    <property type="entry name" value="HHH_5"/>
    <property type="match status" value="1"/>
</dbReference>
<dbReference type="Pfam" id="PF08423">
    <property type="entry name" value="Rad51"/>
    <property type="match status" value="1"/>
</dbReference>
<dbReference type="PIRSF" id="PIRSF005856">
    <property type="entry name" value="Rad51"/>
    <property type="match status" value="1"/>
</dbReference>
<dbReference type="SMART" id="SM00382">
    <property type="entry name" value="AAA"/>
    <property type="match status" value="1"/>
</dbReference>
<dbReference type="SMART" id="SM00278">
    <property type="entry name" value="HhH1"/>
    <property type="match status" value="2"/>
</dbReference>
<dbReference type="SUPFAM" id="SSF52540">
    <property type="entry name" value="P-loop containing nucleoside triphosphate hydrolases"/>
    <property type="match status" value="1"/>
</dbReference>
<dbReference type="SUPFAM" id="SSF47794">
    <property type="entry name" value="Rad51 N-terminal domain-like"/>
    <property type="match status" value="1"/>
</dbReference>
<dbReference type="PROSITE" id="PS50162">
    <property type="entry name" value="RECA_2"/>
    <property type="match status" value="1"/>
</dbReference>
<dbReference type="PROSITE" id="PS50163">
    <property type="entry name" value="RECA_3"/>
    <property type="match status" value="1"/>
</dbReference>
<reference key="1">
    <citation type="journal article" date="2004" name="J. Bacteriol.">
        <title>Complete genome sequence of the genetically tractable hydrogenotrophic methanogen Methanococcus maripaludis.</title>
        <authorList>
            <person name="Hendrickson E.L."/>
            <person name="Kaul R."/>
            <person name="Zhou Y."/>
            <person name="Bovee D."/>
            <person name="Chapman P."/>
            <person name="Chung J."/>
            <person name="Conway de Macario E."/>
            <person name="Dodsworth J.A."/>
            <person name="Gillett W."/>
            <person name="Graham D.E."/>
            <person name="Hackett M."/>
            <person name="Haydock A.K."/>
            <person name="Kang A."/>
            <person name="Land M.L."/>
            <person name="Levy R."/>
            <person name="Lie T.J."/>
            <person name="Major T.A."/>
            <person name="Moore B.C."/>
            <person name="Porat I."/>
            <person name="Palmeiri A."/>
            <person name="Rouse G."/>
            <person name="Saenphimmachak C."/>
            <person name="Soell D."/>
            <person name="Van Dien S."/>
            <person name="Wang T."/>
            <person name="Whitman W.B."/>
            <person name="Xia Q."/>
            <person name="Zhang Y."/>
            <person name="Larimer F.W."/>
            <person name="Olson M.V."/>
            <person name="Leigh J.A."/>
        </authorList>
    </citation>
    <scope>NUCLEOTIDE SEQUENCE [LARGE SCALE GENOMIC DNA]</scope>
    <source>
        <strain>DSM 14266 / JCM 13030 / NBRC 101832 / S2 / LL</strain>
    </source>
</reference>
<sequence length="322" mass="35146">MADVLTELPGVGPSTADKLIEGGYLDFMKIATATIGELTDIEGISEKAAAKMIMAARDLCDLGFKSGVELLKQRQSVWRLSTGSTELDTVLAGGIESQSVTEFAGMFGSGKTQIMHQTCVNLQIREKIFADLEGVVEEELEAPKAVYIDTEGTFRPERVVQMAEGAGIDGQTVLDNTFVARAYNSDMQMLFAEKIEDLIKGGNNIKLVIIDSLTSTFRNEFTGRGKLAERQQKLGRHMATLNKLADLYNCIVLVTNQVAAKPDAYFGVAEQAIGGHVVGHAATFRFFLRKSKGDKRVAKLYDSPHLPDSEAVFRITEKGIQD</sequence>
<accession>P0CW59</accession>
<accession>Q977P5</accession>
<comment type="function">
    <text evidence="1">Involved in DNA repair and in homologous recombination. Binds and assemble on single-stranded DNA to form a nucleoprotein filament. Hydrolyzes ATP in a ssDNA-dependent manner and promotes DNA strand exchange between homologous DNA molecules.</text>
</comment>
<comment type="similarity">
    <text evidence="1">Belongs to the eukaryotic RecA-like protein family.</text>
</comment>